<comment type="function">
    <text evidence="1">Binds to 23S rRNA. Forms part of two intersubunit bridges in the 70S ribosome.</text>
</comment>
<comment type="subunit">
    <text evidence="1">Part of the 50S ribosomal subunit. Forms a cluster with proteins L3 and L19. In the 70S ribosome, L14 and L19 interact and together make contacts with the 16S rRNA in bridges B5 and B8.</text>
</comment>
<comment type="similarity">
    <text evidence="1">Belongs to the universal ribosomal protein uL14 family.</text>
</comment>
<reference key="1">
    <citation type="journal article" date="2005" name="Nat. Biotechnol.">
        <title>The complete genome sequence of the meat-borne lactic acid bacterium Lactobacillus sakei 23K.</title>
        <authorList>
            <person name="Chaillou S."/>
            <person name="Champomier-Verges M.-C."/>
            <person name="Cornet M."/>
            <person name="Crutz-Le Coq A.-M."/>
            <person name="Dudez A.-M."/>
            <person name="Martin V."/>
            <person name="Beaufils S."/>
            <person name="Darbon-Rongere E."/>
            <person name="Bossy R."/>
            <person name="Loux V."/>
            <person name="Zagorec M."/>
        </authorList>
    </citation>
    <scope>NUCLEOTIDE SEQUENCE [LARGE SCALE GENOMIC DNA]</scope>
    <source>
        <strain>23K</strain>
    </source>
</reference>
<keyword id="KW-1185">Reference proteome</keyword>
<keyword id="KW-0687">Ribonucleoprotein</keyword>
<keyword id="KW-0689">Ribosomal protein</keyword>
<keyword id="KW-0694">RNA-binding</keyword>
<keyword id="KW-0699">rRNA-binding</keyword>
<organism>
    <name type="scientific">Latilactobacillus sakei subsp. sakei (strain 23K)</name>
    <name type="common">Lactobacillus sakei subsp. sakei</name>
    <dbReference type="NCBI Taxonomy" id="314315"/>
    <lineage>
        <taxon>Bacteria</taxon>
        <taxon>Bacillati</taxon>
        <taxon>Bacillota</taxon>
        <taxon>Bacilli</taxon>
        <taxon>Lactobacillales</taxon>
        <taxon>Lactobacillaceae</taxon>
        <taxon>Latilactobacillus</taxon>
    </lineage>
</organism>
<protein>
    <recommendedName>
        <fullName evidence="1">Large ribosomal subunit protein uL14</fullName>
    </recommendedName>
    <alternativeName>
        <fullName evidence="2">50S ribosomal protein L14</fullName>
    </alternativeName>
</protein>
<accession>Q38US2</accession>
<dbReference type="EMBL" id="CR936503">
    <property type="protein sequence ID" value="CAI56062.1"/>
    <property type="molecule type" value="Genomic_DNA"/>
</dbReference>
<dbReference type="RefSeq" id="WP_004270201.1">
    <property type="nucleotide sequence ID" value="NC_007576.1"/>
</dbReference>
<dbReference type="SMR" id="Q38US2"/>
<dbReference type="STRING" id="314315.LCA_1754"/>
<dbReference type="GeneID" id="57132671"/>
<dbReference type="KEGG" id="lsa:LCA_1754"/>
<dbReference type="eggNOG" id="COG0093">
    <property type="taxonomic scope" value="Bacteria"/>
</dbReference>
<dbReference type="HOGENOM" id="CLU_095071_2_1_9"/>
<dbReference type="OrthoDB" id="9806379at2"/>
<dbReference type="Proteomes" id="UP000002707">
    <property type="component" value="Chromosome"/>
</dbReference>
<dbReference type="GO" id="GO:0022625">
    <property type="term" value="C:cytosolic large ribosomal subunit"/>
    <property type="evidence" value="ECO:0007669"/>
    <property type="project" value="TreeGrafter"/>
</dbReference>
<dbReference type="GO" id="GO:0070180">
    <property type="term" value="F:large ribosomal subunit rRNA binding"/>
    <property type="evidence" value="ECO:0007669"/>
    <property type="project" value="TreeGrafter"/>
</dbReference>
<dbReference type="GO" id="GO:0003735">
    <property type="term" value="F:structural constituent of ribosome"/>
    <property type="evidence" value="ECO:0007669"/>
    <property type="project" value="InterPro"/>
</dbReference>
<dbReference type="GO" id="GO:0006412">
    <property type="term" value="P:translation"/>
    <property type="evidence" value="ECO:0007669"/>
    <property type="project" value="UniProtKB-UniRule"/>
</dbReference>
<dbReference type="CDD" id="cd00337">
    <property type="entry name" value="Ribosomal_uL14"/>
    <property type="match status" value="1"/>
</dbReference>
<dbReference type="FunFam" id="2.40.150.20:FF:000001">
    <property type="entry name" value="50S ribosomal protein L14"/>
    <property type="match status" value="1"/>
</dbReference>
<dbReference type="Gene3D" id="2.40.150.20">
    <property type="entry name" value="Ribosomal protein L14"/>
    <property type="match status" value="1"/>
</dbReference>
<dbReference type="HAMAP" id="MF_01367">
    <property type="entry name" value="Ribosomal_uL14"/>
    <property type="match status" value="1"/>
</dbReference>
<dbReference type="InterPro" id="IPR000218">
    <property type="entry name" value="Ribosomal_uL14"/>
</dbReference>
<dbReference type="InterPro" id="IPR005745">
    <property type="entry name" value="Ribosomal_uL14_bac-type"/>
</dbReference>
<dbReference type="InterPro" id="IPR019972">
    <property type="entry name" value="Ribosomal_uL14_CS"/>
</dbReference>
<dbReference type="InterPro" id="IPR036853">
    <property type="entry name" value="Ribosomal_uL14_sf"/>
</dbReference>
<dbReference type="NCBIfam" id="TIGR01067">
    <property type="entry name" value="rplN_bact"/>
    <property type="match status" value="1"/>
</dbReference>
<dbReference type="PANTHER" id="PTHR11761">
    <property type="entry name" value="50S/60S RIBOSOMAL PROTEIN L14/L23"/>
    <property type="match status" value="1"/>
</dbReference>
<dbReference type="PANTHER" id="PTHR11761:SF3">
    <property type="entry name" value="LARGE RIBOSOMAL SUBUNIT PROTEIN UL14M"/>
    <property type="match status" value="1"/>
</dbReference>
<dbReference type="Pfam" id="PF00238">
    <property type="entry name" value="Ribosomal_L14"/>
    <property type="match status" value="1"/>
</dbReference>
<dbReference type="SMART" id="SM01374">
    <property type="entry name" value="Ribosomal_L14"/>
    <property type="match status" value="1"/>
</dbReference>
<dbReference type="SUPFAM" id="SSF50193">
    <property type="entry name" value="Ribosomal protein L14"/>
    <property type="match status" value="1"/>
</dbReference>
<dbReference type="PROSITE" id="PS00049">
    <property type="entry name" value="RIBOSOMAL_L14"/>
    <property type="match status" value="1"/>
</dbReference>
<feature type="chain" id="PRO_1000055613" description="Large ribosomal subunit protein uL14">
    <location>
        <begin position="1"/>
        <end position="122"/>
    </location>
</feature>
<name>RL14_LATSS</name>
<sequence>MIQSESRLKVADNSGAREILTIKVLGGSGRKTANIGDVIVATIKQATPGGVVKKGEVVKAVIVRTKSGARRVDGSYIKFDENAAVIINDDKTPKGTRIFGPVARELRDSDFMKIVSLAPEVL</sequence>
<evidence type="ECO:0000255" key="1">
    <source>
        <dbReference type="HAMAP-Rule" id="MF_01367"/>
    </source>
</evidence>
<evidence type="ECO:0000305" key="2"/>
<gene>
    <name evidence="1" type="primary">rplN</name>
    <name type="ordered locus">LCA_1754</name>
</gene>
<proteinExistence type="inferred from homology"/>